<comment type="function">
    <text evidence="4">Possible exonuclease involved in phage DNA recombination, replication, and repair.</text>
</comment>
<comment type="subunit">
    <text evidence="1">Could consist of two subunits: D13 and D12.</text>
</comment>
<comment type="induction">
    <text evidence="3">Expressed in the early phase of the viral replicative cycle.</text>
</comment>
<reference key="1">
    <citation type="journal article" date="1988" name="Nucleic Acids Res.">
        <title>The nucleotide sequence of the region of bacteriophage T5 early genes D10-D15.</title>
        <authorList>
            <person name="Kaliman A.V."/>
            <person name="Kryukov V.M."/>
            <person name="Bayev A.A."/>
        </authorList>
    </citation>
    <scope>NUCLEOTIDE SEQUENCE [GENOMIC DNA]</scope>
</reference>
<reference key="2">
    <citation type="submission" date="2004-01" db="EMBL/GenBank/DDBJ databases">
        <title>Bacteriophage T5 complete genome.</title>
        <authorList>
            <person name="Ksenzenko V.N."/>
            <person name="Kaliman A.V."/>
            <person name="Krutilina A.I."/>
            <person name="Shlyapnikov M.G."/>
        </authorList>
    </citation>
    <scope>NUCLEOTIDE SEQUENCE [LARGE SCALE GENOMIC DNA]</scope>
</reference>
<reference key="3">
    <citation type="journal article" date="2005" name="Virology">
        <title>Complete genome sequence of bacteriophage T5.</title>
        <authorList>
            <person name="Wang J."/>
            <person name="Jiang Y."/>
            <person name="Vincent M."/>
            <person name="Sun Y."/>
            <person name="Yu H."/>
            <person name="Wang J."/>
            <person name="Bao Q."/>
            <person name="Kong H."/>
            <person name="Hu S."/>
        </authorList>
    </citation>
    <scope>NUCLEOTIDE SEQUENCE [LARGE SCALE GENOMIC DNA]</scope>
    <scope>INDUCTION</scope>
    <source>
        <strain evidence="7">ATCC 11303-B5</strain>
    </source>
</reference>
<reference key="4">
    <citation type="journal article" date="2014" name="J. Virol.">
        <title>Insights into bacteriophage T5 structure from analysis of its morphogenesis genes and protein components.</title>
        <authorList>
            <person name="Zivanovic Y."/>
            <person name="Confalonieri F."/>
            <person name="Ponchon L."/>
            <person name="Lurz R."/>
            <person name="Chami M."/>
            <person name="Flayhan A."/>
            <person name="Renouard M."/>
            <person name="Huet A."/>
            <person name="Decottignies P."/>
            <person name="Davidson A.R."/>
            <person name="Breyton C."/>
            <person name="Boulanger P."/>
        </authorList>
    </citation>
    <scope>NUCLEOTIDE SEQUENCE [LARGE SCALE GENOMIC DNA]</scope>
    <source>
        <strain>St0 deletion mutant</strain>
    </source>
</reference>
<reference key="5">
    <citation type="journal article" date="1989" name="FEBS Lett.">
        <title>Two early genes of bacteriophage T5 encode proteins containing an NTP-binding sequence motif and probably involved in DNA replication, recombination and repair.</title>
        <authorList>
            <person name="Blinov V.M."/>
            <person name="Koonin E.V."/>
            <person name="Gorbalenya A.E."/>
            <person name="Kaliman A.V."/>
            <person name="Kryukov V.M."/>
        </authorList>
    </citation>
    <scope>FUNCTION</scope>
</reference>
<protein>
    <recommendedName>
        <fullName evidence="2">Probable exonuclease subunit 1</fullName>
        <ecNumber evidence="2">3.1.11.-</ecNumber>
    </recommendedName>
    <alternativeName>
        <fullName>D12</fullName>
    </alternativeName>
</protein>
<organismHost>
    <name type="scientific">Escherichia coli</name>
    <dbReference type="NCBI Taxonomy" id="562"/>
</organismHost>
<evidence type="ECO:0000250" key="1">
    <source>
        <dbReference type="UniProtKB" id="P04521"/>
    </source>
</evidence>
<evidence type="ECO:0000305" key="2"/>
<evidence type="ECO:0000305" key="3">
    <source>
    </source>
</evidence>
<evidence type="ECO:0000305" key="4">
    <source>
    </source>
</evidence>
<evidence type="ECO:0000312" key="5">
    <source>
        <dbReference type="EMBL" id="AAS77173.1"/>
    </source>
</evidence>
<evidence type="ECO:0000312" key="6">
    <source>
        <dbReference type="EMBL" id="AAU05264.1"/>
    </source>
</evidence>
<evidence type="ECO:0000312" key="7">
    <source>
        <dbReference type="EMBL" id="AAX12055.1"/>
    </source>
</evidence>
<name>EXO1_BPT5</name>
<accession>P11108</accession>
<accession>Q66LT8</accession>
<dbReference type="EC" id="3.1.11.-" evidence="2"/>
<dbReference type="EMBL" id="AY543070">
    <property type="protein sequence ID" value="AAS77173.1"/>
    <property type="molecule type" value="Genomic_DNA"/>
</dbReference>
<dbReference type="EMBL" id="AY692264">
    <property type="protein sequence ID" value="AAU05264.1"/>
    <property type="molecule type" value="Genomic_DNA"/>
</dbReference>
<dbReference type="EMBL" id="AY587007">
    <property type="protein sequence ID" value="AAX12055.1"/>
    <property type="molecule type" value="Genomic_DNA"/>
</dbReference>
<dbReference type="PIR" id="S01932">
    <property type="entry name" value="WCBPT5"/>
</dbReference>
<dbReference type="RefSeq" id="YP_006955.1">
    <property type="nucleotide sequence ID" value="NC_005859.1"/>
</dbReference>
<dbReference type="GeneID" id="2777608"/>
<dbReference type="KEGG" id="vg:2777608"/>
<dbReference type="Proteomes" id="UP000002107">
    <property type="component" value="Genome"/>
</dbReference>
<dbReference type="Proteomes" id="UP000002141">
    <property type="component" value="Segment"/>
</dbReference>
<dbReference type="Proteomes" id="UP000002503">
    <property type="component" value="Segment"/>
</dbReference>
<dbReference type="GO" id="GO:0004527">
    <property type="term" value="F:exonuclease activity"/>
    <property type="evidence" value="ECO:0007669"/>
    <property type="project" value="UniProtKB-KW"/>
</dbReference>
<dbReference type="GO" id="GO:0099015">
    <property type="term" value="P:degradation of host chromosome by virus"/>
    <property type="evidence" value="ECO:0007669"/>
    <property type="project" value="UniProtKB-KW"/>
</dbReference>
<dbReference type="GO" id="GO:0006281">
    <property type="term" value="P:DNA repair"/>
    <property type="evidence" value="ECO:0007669"/>
    <property type="project" value="UniProtKB-KW"/>
</dbReference>
<dbReference type="GO" id="GO:0039657">
    <property type="term" value="P:symbiont-mediated suppression of host gene expression"/>
    <property type="evidence" value="ECO:0007669"/>
    <property type="project" value="UniProtKB-KW"/>
</dbReference>
<dbReference type="Gene3D" id="3.60.21.10">
    <property type="match status" value="1"/>
</dbReference>
<dbReference type="InterPro" id="IPR004843">
    <property type="entry name" value="Calcineurin-like_PHP_ApaH"/>
</dbReference>
<dbReference type="InterPro" id="IPR050535">
    <property type="entry name" value="DNA_Repair-Maintenance_Comp"/>
</dbReference>
<dbReference type="InterPro" id="IPR029052">
    <property type="entry name" value="Metallo-depent_PP-like"/>
</dbReference>
<dbReference type="PANTHER" id="PTHR30337">
    <property type="entry name" value="COMPONENT OF ATP-DEPENDENT DSDNA EXONUCLEASE"/>
    <property type="match status" value="1"/>
</dbReference>
<dbReference type="PANTHER" id="PTHR30337:SF7">
    <property type="entry name" value="PHOSPHOESTERASE"/>
    <property type="match status" value="1"/>
</dbReference>
<dbReference type="Pfam" id="PF00149">
    <property type="entry name" value="Metallophos"/>
    <property type="match status" value="1"/>
</dbReference>
<dbReference type="SUPFAM" id="SSF56300">
    <property type="entry name" value="Metallo-dependent phosphatases"/>
    <property type="match status" value="1"/>
</dbReference>
<keyword id="KW-1261">Bacterial host gene expression shutoff by virus</keyword>
<keyword id="KW-1247">Degradation of host chromosome by virus</keyword>
<keyword id="KW-0227">DNA damage</keyword>
<keyword id="KW-0234">DNA repair</keyword>
<keyword id="KW-0244">Early protein</keyword>
<keyword id="KW-0269">Exonuclease</keyword>
<keyword id="KW-1190">Host gene expression shutoff by virus</keyword>
<keyword id="KW-0945">Host-virus interaction</keyword>
<keyword id="KW-0378">Hydrolase</keyword>
<keyword id="KW-0540">Nuclease</keyword>
<keyword id="KW-1185">Reference proteome</keyword>
<sequence>MRILFSADHHIKLGQDKVPKEWQKRRFLMLGERLNDIFHNHNCDLHIAGGDILDVADPSSEEIELLEQFMSRLDHPGKIFTGNHEMLTKTISCLYHYAGVINKVTSGKWEVITKPYRSPEFDIVPYDEIHKAKWKPPVSKLCFTHVRGEIPPHVKPEIDLTKYNCYDTVIAGDLHSYTNSQTIGSTRLLYPGSPLTTSFHRERTKGTNGCFIIDTDTLKVEWIELGDLPQLIRKTIGAGEEMEPSDYDRVVYEVTGDVVQLKSIKDSDLLDKKINHRVTKDAKLNLVDLDMLGELELYFREVEKLSQGDIDRILARAAKYVKDYN</sequence>
<proteinExistence type="evidence at transcript level"/>
<organism>
    <name type="scientific">Escherichia phage T5</name>
    <name type="common">Enterobacteria phage T5</name>
    <dbReference type="NCBI Taxonomy" id="2695836"/>
    <lineage>
        <taxon>Viruses</taxon>
        <taxon>Duplodnaviria</taxon>
        <taxon>Heunggongvirae</taxon>
        <taxon>Uroviricota</taxon>
        <taxon>Caudoviricetes</taxon>
        <taxon>Demerecviridae</taxon>
        <taxon>Markadamsvirinae</taxon>
        <taxon>Tequintavirus</taxon>
        <taxon>Tequintavirus T5</taxon>
    </lineage>
</organism>
<gene>
    <name type="primary">D12</name>
    <name evidence="5" type="ORF">T5.127</name>
    <name evidence="6" type="ORF">T5p125</name>
</gene>
<feature type="chain" id="PRO_0000164936" description="Probable exonuclease subunit 1">
    <location>
        <begin position="1"/>
        <end position="325"/>
    </location>
</feature>